<keyword id="KW-0007">Acetylation</keyword>
<keyword id="KW-0025">Alternative splicing</keyword>
<keyword id="KW-0238">DNA-binding</keyword>
<keyword id="KW-1017">Isopeptide bond</keyword>
<keyword id="KW-0479">Metal-binding</keyword>
<keyword id="KW-0539">Nucleus</keyword>
<keyword id="KW-0597">Phosphoprotein</keyword>
<keyword id="KW-1185">Reference proteome</keyword>
<keyword id="KW-0804">Transcription</keyword>
<keyword id="KW-0805">Transcription regulation</keyword>
<keyword id="KW-0832">Ubl conjugation</keyword>
<keyword id="KW-0862">Zinc</keyword>
<keyword id="KW-0863">Zinc-finger</keyword>
<dbReference type="EMBL" id="AK131150">
    <property type="protein sequence ID" value="BAD21400.1"/>
    <property type="molecule type" value="mRNA"/>
</dbReference>
<dbReference type="EMBL" id="AK132612">
    <property type="protein sequence ID" value="BAE21262.1"/>
    <property type="molecule type" value="mRNA"/>
</dbReference>
<dbReference type="EMBL" id="AK165882">
    <property type="protein sequence ID" value="BAE38435.1"/>
    <property type="molecule type" value="mRNA"/>
</dbReference>
<dbReference type="CCDS" id="CCDS38674.1">
    <molecule id="Q6KAQ7-1"/>
</dbReference>
<dbReference type="CCDS" id="CCDS84698.1">
    <molecule id="Q6KAQ7-2"/>
</dbReference>
<dbReference type="RefSeq" id="NP_001074224.1">
    <molecule id="Q6KAQ7-1"/>
    <property type="nucleotide sequence ID" value="NM_001080755.2"/>
</dbReference>
<dbReference type="RefSeq" id="NP_001333584.1">
    <molecule id="Q6KAQ7-2"/>
    <property type="nucleotide sequence ID" value="NM_001346655.1"/>
</dbReference>
<dbReference type="RefSeq" id="NP_001342602.1">
    <molecule id="Q6KAQ7-1"/>
    <property type="nucleotide sequence ID" value="NM_001355673.1"/>
</dbReference>
<dbReference type="RefSeq" id="XP_006500911.1">
    <molecule id="Q6KAQ7-1"/>
    <property type="nucleotide sequence ID" value="XM_006500848.5"/>
</dbReference>
<dbReference type="RefSeq" id="XP_006500913.1">
    <molecule id="Q6KAQ7-1"/>
    <property type="nucleotide sequence ID" value="XM_006500850.4"/>
</dbReference>
<dbReference type="RefSeq" id="XP_006500914.1">
    <property type="nucleotide sequence ID" value="XM_006500851.3"/>
</dbReference>
<dbReference type="RefSeq" id="XP_006500919.1">
    <molecule id="Q6KAQ7-3"/>
    <property type="nucleotide sequence ID" value="XM_006500856.5"/>
</dbReference>
<dbReference type="RefSeq" id="XP_006500920.1">
    <molecule id="Q6KAQ7-2"/>
    <property type="nucleotide sequence ID" value="XM_006500857.5"/>
</dbReference>
<dbReference type="RefSeq" id="XP_017174912.1">
    <molecule id="Q6KAQ7-1"/>
    <property type="nucleotide sequence ID" value="XM_017319423.3"/>
</dbReference>
<dbReference type="RefSeq" id="XP_030108210.1">
    <molecule id="Q6KAQ7-1"/>
    <property type="nucleotide sequence ID" value="XM_030252350.2"/>
</dbReference>
<dbReference type="RefSeq" id="XP_030108213.1">
    <molecule id="Q6KAQ7-2"/>
    <property type="nucleotide sequence ID" value="XM_030252353.2"/>
</dbReference>
<dbReference type="SMR" id="Q6KAQ7"/>
<dbReference type="BioGRID" id="224485">
    <property type="interactions" value="2"/>
</dbReference>
<dbReference type="ComplexPortal" id="CPX-1025">
    <property type="entry name" value="GCN5-containing ATAC complex"/>
</dbReference>
<dbReference type="ComplexPortal" id="CPX-1029">
    <property type="entry name" value="PCAF-containing ATAC complex"/>
</dbReference>
<dbReference type="FunCoup" id="Q6KAQ7">
    <property type="interactions" value="3091"/>
</dbReference>
<dbReference type="IntAct" id="Q6KAQ7">
    <property type="interactions" value="4"/>
</dbReference>
<dbReference type="MINT" id="Q6KAQ7"/>
<dbReference type="STRING" id="10090.ENSMUSP00000101706"/>
<dbReference type="GlyGen" id="Q6KAQ7">
    <property type="glycosylation" value="3 sites, 1 O-linked glycan (2 sites)"/>
</dbReference>
<dbReference type="iPTMnet" id="Q6KAQ7"/>
<dbReference type="PhosphoSitePlus" id="Q6KAQ7"/>
<dbReference type="PaxDb" id="10090-ENSMUSP00000101706"/>
<dbReference type="PeptideAtlas" id="Q6KAQ7"/>
<dbReference type="ProteomicsDB" id="275327">
    <molecule id="Q6KAQ7-1"/>
</dbReference>
<dbReference type="ProteomicsDB" id="275328">
    <molecule id="Q6KAQ7-2"/>
</dbReference>
<dbReference type="ProteomicsDB" id="275329">
    <molecule id="Q6KAQ7-3"/>
</dbReference>
<dbReference type="Pumba" id="Q6KAQ7"/>
<dbReference type="Antibodypedia" id="33487">
    <property type="antibodies" value="84 antibodies from 24 providers"/>
</dbReference>
<dbReference type="DNASU" id="108946"/>
<dbReference type="Ensembl" id="ENSMUST00000106100.9">
    <molecule id="Q6KAQ7-1"/>
    <property type="protein sequence ID" value="ENSMUSP00000101706.3"/>
    <property type="gene ID" value="ENSMUSG00000039068.17"/>
</dbReference>
<dbReference type="Ensembl" id="ENSMUST00000106101.2">
    <molecule id="Q6KAQ7-1"/>
    <property type="protein sequence ID" value="ENSMUSP00000101707.2"/>
    <property type="gene ID" value="ENSMUSG00000039068.17"/>
</dbReference>
<dbReference type="Ensembl" id="ENSMUST00000106103.8">
    <molecule id="Q6KAQ7-2"/>
    <property type="protein sequence ID" value="ENSMUSP00000101709.2"/>
    <property type="gene ID" value="ENSMUSG00000039068.17"/>
</dbReference>
<dbReference type="Ensembl" id="ENSMUST00000200570.5">
    <molecule id="Q6KAQ7-3"/>
    <property type="protein sequence ID" value="ENSMUSP00000143693.2"/>
    <property type="gene ID" value="ENSMUSG00000039068.17"/>
</dbReference>
<dbReference type="GeneID" id="108946"/>
<dbReference type="KEGG" id="mmu:108946"/>
<dbReference type="UCSC" id="uc008rtm.1">
    <molecule id="Q6KAQ7-2"/>
    <property type="organism name" value="mouse"/>
</dbReference>
<dbReference type="UCSC" id="uc008rtn.2">
    <molecule id="Q6KAQ7-1"/>
    <property type="organism name" value="mouse"/>
</dbReference>
<dbReference type="UCSC" id="uc012czm.1">
    <molecule id="Q6KAQ7-3"/>
    <property type="organism name" value="mouse"/>
</dbReference>
<dbReference type="AGR" id="MGI:1920453"/>
<dbReference type="CTD" id="26009"/>
<dbReference type="MGI" id="MGI:1920453">
    <property type="gene designation" value="Zzz3"/>
</dbReference>
<dbReference type="VEuPathDB" id="HostDB:ENSMUSG00000039068"/>
<dbReference type="eggNOG" id="ENOG502QS4F">
    <property type="taxonomic scope" value="Eukaryota"/>
</dbReference>
<dbReference type="GeneTree" id="ENSGT00390000005307"/>
<dbReference type="HOGENOM" id="CLU_034414_0_0_1"/>
<dbReference type="InParanoid" id="Q6KAQ7"/>
<dbReference type="OMA" id="PCTDSQV"/>
<dbReference type="OrthoDB" id="20473at2759"/>
<dbReference type="PhylomeDB" id="Q6KAQ7"/>
<dbReference type="TreeFam" id="TF106396"/>
<dbReference type="Reactome" id="R-MMU-9772755">
    <property type="pathway name" value="Formation of WDR5-containing histone-modifying complexes"/>
</dbReference>
<dbReference type="BioGRID-ORCS" id="108946">
    <property type="hits" value="23 hits in 81 CRISPR screens"/>
</dbReference>
<dbReference type="ChiTaRS" id="Zzz3">
    <property type="organism name" value="mouse"/>
</dbReference>
<dbReference type="PRO" id="PR:Q6KAQ7"/>
<dbReference type="Proteomes" id="UP000000589">
    <property type="component" value="Chromosome 3"/>
</dbReference>
<dbReference type="RNAct" id="Q6KAQ7">
    <property type="molecule type" value="protein"/>
</dbReference>
<dbReference type="Bgee" id="ENSMUSG00000039068">
    <property type="expression patterns" value="Expressed in cleaving embryo and 259 other cell types or tissues"/>
</dbReference>
<dbReference type="ExpressionAtlas" id="Q6KAQ7">
    <property type="expression patterns" value="baseline and differential"/>
</dbReference>
<dbReference type="GO" id="GO:0140672">
    <property type="term" value="C:ATAC complex"/>
    <property type="evidence" value="ECO:0000314"/>
    <property type="project" value="MGI"/>
</dbReference>
<dbReference type="GO" id="GO:0072686">
    <property type="term" value="C:mitotic spindle"/>
    <property type="evidence" value="ECO:0000303"/>
    <property type="project" value="ComplexPortal"/>
</dbReference>
<dbReference type="GO" id="GO:0005730">
    <property type="term" value="C:nucleolus"/>
    <property type="evidence" value="ECO:0007669"/>
    <property type="project" value="Ensembl"/>
</dbReference>
<dbReference type="GO" id="GO:0005654">
    <property type="term" value="C:nucleoplasm"/>
    <property type="evidence" value="ECO:0007669"/>
    <property type="project" value="Ensembl"/>
</dbReference>
<dbReference type="GO" id="GO:0003677">
    <property type="term" value="F:DNA binding"/>
    <property type="evidence" value="ECO:0007669"/>
    <property type="project" value="UniProtKB-KW"/>
</dbReference>
<dbReference type="GO" id="GO:0042393">
    <property type="term" value="F:histone binding"/>
    <property type="evidence" value="ECO:0000250"/>
    <property type="project" value="UniProtKB"/>
</dbReference>
<dbReference type="GO" id="GO:0140566">
    <property type="term" value="F:histone reader activity"/>
    <property type="evidence" value="ECO:0007669"/>
    <property type="project" value="Ensembl"/>
</dbReference>
<dbReference type="GO" id="GO:0070577">
    <property type="term" value="F:lysine-acetylated histone binding"/>
    <property type="evidence" value="ECO:0007669"/>
    <property type="project" value="Ensembl"/>
</dbReference>
<dbReference type="GO" id="GO:0035064">
    <property type="term" value="F:methylated histone binding"/>
    <property type="evidence" value="ECO:0007669"/>
    <property type="project" value="Ensembl"/>
</dbReference>
<dbReference type="GO" id="GO:0008270">
    <property type="term" value="F:zinc ion binding"/>
    <property type="evidence" value="ECO:0007669"/>
    <property type="project" value="UniProtKB-KW"/>
</dbReference>
<dbReference type="GO" id="GO:0006325">
    <property type="term" value="P:chromatin organization"/>
    <property type="evidence" value="ECO:0000250"/>
    <property type="project" value="UniProtKB"/>
</dbReference>
<dbReference type="GO" id="GO:0051726">
    <property type="term" value="P:regulation of cell cycle"/>
    <property type="evidence" value="ECO:0000315"/>
    <property type="project" value="ComplexPortal"/>
</dbReference>
<dbReference type="GO" id="GO:0051302">
    <property type="term" value="P:regulation of cell division"/>
    <property type="evidence" value="ECO:0000314"/>
    <property type="project" value="ComplexPortal"/>
</dbReference>
<dbReference type="GO" id="GO:0006355">
    <property type="term" value="P:regulation of DNA-templated transcription"/>
    <property type="evidence" value="ECO:0000266"/>
    <property type="project" value="ComplexPortal"/>
</dbReference>
<dbReference type="GO" id="GO:0045995">
    <property type="term" value="P:regulation of embryonic development"/>
    <property type="evidence" value="ECO:0000314"/>
    <property type="project" value="ComplexPortal"/>
</dbReference>
<dbReference type="GO" id="GO:0006357">
    <property type="term" value="P:regulation of transcription by RNA polymerase II"/>
    <property type="evidence" value="ECO:0000266"/>
    <property type="project" value="ComplexPortal"/>
</dbReference>
<dbReference type="CDD" id="cd00167">
    <property type="entry name" value="SANT"/>
    <property type="match status" value="1"/>
</dbReference>
<dbReference type="CDD" id="cd02341">
    <property type="entry name" value="ZZ_ZZZ3"/>
    <property type="match status" value="1"/>
</dbReference>
<dbReference type="FunFam" id="1.10.10.60:FF:000128">
    <property type="entry name" value="Putative ZZ-type zinc finger-containing protein 3"/>
    <property type="match status" value="1"/>
</dbReference>
<dbReference type="Gene3D" id="3.30.60.90">
    <property type="match status" value="1"/>
</dbReference>
<dbReference type="Gene3D" id="1.10.10.60">
    <property type="entry name" value="Homeodomain-like"/>
    <property type="match status" value="1"/>
</dbReference>
<dbReference type="InterPro" id="IPR009057">
    <property type="entry name" value="Homeodomain-like_sf"/>
</dbReference>
<dbReference type="InterPro" id="IPR017930">
    <property type="entry name" value="Myb_dom"/>
</dbReference>
<dbReference type="InterPro" id="IPR001005">
    <property type="entry name" value="SANT/Myb"/>
</dbReference>
<dbReference type="InterPro" id="IPR000433">
    <property type="entry name" value="Znf_ZZ"/>
</dbReference>
<dbReference type="InterPro" id="IPR043145">
    <property type="entry name" value="Znf_ZZ_sf"/>
</dbReference>
<dbReference type="InterPro" id="IPR037830">
    <property type="entry name" value="ZZZ3"/>
</dbReference>
<dbReference type="InterPro" id="IPR041981">
    <property type="entry name" value="ZZZ3_ZZ"/>
</dbReference>
<dbReference type="PANTHER" id="PTHR22705">
    <property type="entry name" value="ZINC FINGER, ZZ DOMAIN CONTAINING 3"/>
    <property type="match status" value="1"/>
</dbReference>
<dbReference type="PANTHER" id="PTHR22705:SF0">
    <property type="entry name" value="ZZ-TYPE ZINC FINGER-CONTAINING PROTEIN 3"/>
    <property type="match status" value="1"/>
</dbReference>
<dbReference type="Pfam" id="PF00249">
    <property type="entry name" value="Myb_DNA-binding"/>
    <property type="match status" value="1"/>
</dbReference>
<dbReference type="Pfam" id="PF00569">
    <property type="entry name" value="ZZ"/>
    <property type="match status" value="1"/>
</dbReference>
<dbReference type="SMART" id="SM00717">
    <property type="entry name" value="SANT"/>
    <property type="match status" value="1"/>
</dbReference>
<dbReference type="SMART" id="SM00291">
    <property type="entry name" value="ZnF_ZZ"/>
    <property type="match status" value="1"/>
</dbReference>
<dbReference type="SUPFAM" id="SSF46689">
    <property type="entry name" value="Homeodomain-like"/>
    <property type="match status" value="1"/>
</dbReference>
<dbReference type="SUPFAM" id="SSF57850">
    <property type="entry name" value="RING/U-box"/>
    <property type="match status" value="1"/>
</dbReference>
<dbReference type="PROSITE" id="PS51294">
    <property type="entry name" value="HTH_MYB"/>
    <property type="match status" value="1"/>
</dbReference>
<dbReference type="PROSITE" id="PS01357">
    <property type="entry name" value="ZF_ZZ_1"/>
    <property type="match status" value="1"/>
</dbReference>
<dbReference type="PROSITE" id="PS50135">
    <property type="entry name" value="ZF_ZZ_2"/>
    <property type="match status" value="1"/>
</dbReference>
<sequence>MVGTCHSMAASRSTRVTRSTVGLNGLDESFCGRTLRNRSIAHPEEISSHSQVRSRSPKKRAEPVPTQKGTNNGRTSDVRQQSARDSWVSPRKRRLSSSEKDDLERQALESCERRQAEPAPPVFKNIKRCLRAEATNSSEEDSPVKPDKEPGEHRRIVVDHDADFQGAKRACRCLILDDCEKREVKKVNVSEEGPLNAAVVEEITGYLTVNGVDDSDSAVINCDDCQPDGNTKQNNPGSCVLQEESVAGDGDSETQTSVFCGSRKEDSCIDHFVPCTKSDVQVKLEDHKLVTACLPVERRNQLTAESASGPVSEIQSSLRDSEEEVDVVGDSSASKEQCNENSSNPLDTGSERMPVSGEPELSSILDCVSAQMTSLSEPQEHRYTLRTSPRRAALARSSPTKTTSPYRENGQLEETNLSPQETNTTVSDHVSESPTDPAEVPQDGKVLCCDSENYGSEGLSKPPSEARVNIGHLPSAKESASQHTAEEEDDDPDVYYFESDHVALKHNKDYQRLLQTIAVLEAQRSQAVQDLESLGKHQREALKNPIGFVEKLQKKADIGLPYPQRVVQLPEIMWDQYTNSLGNFEREFKHRKRHTRRVKLVFDKVGLPARPKSPLDPKKDGESLSYSMLPLSDGPEGSHNRPQMIRGRLCDDSKPETFNQLWTVEEQKKLEQLLLKYPPEEVESRRWQKIADELGNRTAKQVASRVQKYFIKLTKAGIPVPGRTPNLYIYSRKSSTSRRQHPLNKHLFKPSTFMTSHEPPVYMDEDDDRSCLHSHMSTAAEEASDEESIPIIYRSLPEYKELLQFKKLKKQKLQQMQAESGFVQHVGFKCDNCGVEPIQGVRWHCQDCPPEMSLDFCDSCSDCPHETDIHKEDHQLEPVYKSETFLDRDYCVSQGTSYSYLDPNYFPANR</sequence>
<comment type="function">
    <text evidence="1">Histone H3 reader that is required for the ATAC complex-mediated maintenance of histone acetylation and gene activation (By similarity). Component of the ATAC complex, a complex with histone acetyltransferase activity on histones H3 and H4 (By similarity).</text>
</comment>
<comment type="subunit">
    <text evidence="1">Component of the ADA2A-containing complex (ATAC), composed of KAT14, KAT2A, TADA2L, TADA3L, ZZ3, MBIP, WDR5, YEATS2, CCDC101 and DR1 (By similarity). Interacts via (ZZ-type zinc finger) with histone H3 in a methylation-independent manner and acetylation on 'Lys-4' (H3K4ac) moderately enhances the interaction (By similarity).</text>
</comment>
<comment type="subcellular location">
    <subcellularLocation>
        <location evidence="3">Nucleus</location>
    </subcellularLocation>
</comment>
<comment type="alternative products">
    <event type="alternative splicing"/>
    <isoform>
        <id>Q6KAQ7-1</id>
        <name>1</name>
        <sequence type="displayed"/>
    </isoform>
    <isoform>
        <id>Q6KAQ7-2</id>
        <name>2</name>
        <sequence type="described" ref="VSP_025514 VSP_025517"/>
    </isoform>
    <isoform>
        <id>Q6KAQ7-3</id>
        <name>3</name>
        <sequence type="described" ref="VSP_025515 VSP_025516 VSP_025518"/>
    </isoform>
</comment>
<protein>
    <recommendedName>
        <fullName>ZZ-type zinc finger-containing protein 3</fullName>
    </recommendedName>
</protein>
<organism>
    <name type="scientific">Mus musculus</name>
    <name type="common">Mouse</name>
    <dbReference type="NCBI Taxonomy" id="10090"/>
    <lineage>
        <taxon>Eukaryota</taxon>
        <taxon>Metazoa</taxon>
        <taxon>Chordata</taxon>
        <taxon>Craniata</taxon>
        <taxon>Vertebrata</taxon>
        <taxon>Euteleostomi</taxon>
        <taxon>Mammalia</taxon>
        <taxon>Eutheria</taxon>
        <taxon>Euarchontoglires</taxon>
        <taxon>Glires</taxon>
        <taxon>Rodentia</taxon>
        <taxon>Myomorpha</taxon>
        <taxon>Muroidea</taxon>
        <taxon>Muridae</taxon>
        <taxon>Murinae</taxon>
        <taxon>Mus</taxon>
        <taxon>Mus</taxon>
    </lineage>
</organism>
<proteinExistence type="evidence at protein level"/>
<evidence type="ECO:0000250" key="1">
    <source>
        <dbReference type="UniProtKB" id="Q8IYH5"/>
    </source>
</evidence>
<evidence type="ECO:0000255" key="2">
    <source>
        <dbReference type="PROSITE-ProRule" id="PRU00228"/>
    </source>
</evidence>
<evidence type="ECO:0000255" key="3">
    <source>
        <dbReference type="PROSITE-ProRule" id="PRU00625"/>
    </source>
</evidence>
<evidence type="ECO:0000256" key="4">
    <source>
        <dbReference type="SAM" id="MobiDB-lite"/>
    </source>
</evidence>
<evidence type="ECO:0000303" key="5">
    <source>
    </source>
</evidence>
<evidence type="ECO:0007744" key="6">
    <source>
    </source>
</evidence>
<name>ZZZ3_MOUSE</name>
<gene>
    <name type="primary">Zzz3</name>
</gene>
<reference key="1">
    <citation type="journal article" date="2004" name="DNA Res.">
        <title>Prediction of the coding sequences of mouse homologues of FLJ genes: the complete nucleotide sequences of 110 mouse FLJ-homologous cDNAs identified by screening of terminal sequences of cDNA clones randomly sampled from size-fractionated libraries.</title>
        <authorList>
            <person name="Okazaki N."/>
            <person name="Kikuno R."/>
            <person name="Ohara R."/>
            <person name="Inamoto S."/>
            <person name="Koseki H."/>
            <person name="Hiraoka S."/>
            <person name="Saga Y."/>
            <person name="Kitamura H."/>
            <person name="Nakagawa T."/>
            <person name="Nagase T."/>
            <person name="Ohara O."/>
            <person name="Koga H."/>
        </authorList>
    </citation>
    <scope>NUCLEOTIDE SEQUENCE [LARGE SCALE MRNA] (ISOFORM 1)</scope>
    <source>
        <tissue>Embryonic tail</tissue>
    </source>
</reference>
<reference key="2">
    <citation type="journal article" date="2005" name="Science">
        <title>The transcriptional landscape of the mammalian genome.</title>
        <authorList>
            <person name="Carninci P."/>
            <person name="Kasukawa T."/>
            <person name="Katayama S."/>
            <person name="Gough J."/>
            <person name="Frith M.C."/>
            <person name="Maeda N."/>
            <person name="Oyama R."/>
            <person name="Ravasi T."/>
            <person name="Lenhard B."/>
            <person name="Wells C."/>
            <person name="Kodzius R."/>
            <person name="Shimokawa K."/>
            <person name="Bajic V.B."/>
            <person name="Brenner S.E."/>
            <person name="Batalov S."/>
            <person name="Forrest A.R."/>
            <person name="Zavolan M."/>
            <person name="Davis M.J."/>
            <person name="Wilming L.G."/>
            <person name="Aidinis V."/>
            <person name="Allen J.E."/>
            <person name="Ambesi-Impiombato A."/>
            <person name="Apweiler R."/>
            <person name="Aturaliya R.N."/>
            <person name="Bailey T.L."/>
            <person name="Bansal M."/>
            <person name="Baxter L."/>
            <person name="Beisel K.W."/>
            <person name="Bersano T."/>
            <person name="Bono H."/>
            <person name="Chalk A.M."/>
            <person name="Chiu K.P."/>
            <person name="Choudhary V."/>
            <person name="Christoffels A."/>
            <person name="Clutterbuck D.R."/>
            <person name="Crowe M.L."/>
            <person name="Dalla E."/>
            <person name="Dalrymple B.P."/>
            <person name="de Bono B."/>
            <person name="Della Gatta G."/>
            <person name="di Bernardo D."/>
            <person name="Down T."/>
            <person name="Engstrom P."/>
            <person name="Fagiolini M."/>
            <person name="Faulkner G."/>
            <person name="Fletcher C.F."/>
            <person name="Fukushima T."/>
            <person name="Furuno M."/>
            <person name="Futaki S."/>
            <person name="Gariboldi M."/>
            <person name="Georgii-Hemming P."/>
            <person name="Gingeras T.R."/>
            <person name="Gojobori T."/>
            <person name="Green R.E."/>
            <person name="Gustincich S."/>
            <person name="Harbers M."/>
            <person name="Hayashi Y."/>
            <person name="Hensch T.K."/>
            <person name="Hirokawa N."/>
            <person name="Hill D."/>
            <person name="Huminiecki L."/>
            <person name="Iacono M."/>
            <person name="Ikeo K."/>
            <person name="Iwama A."/>
            <person name="Ishikawa T."/>
            <person name="Jakt M."/>
            <person name="Kanapin A."/>
            <person name="Katoh M."/>
            <person name="Kawasawa Y."/>
            <person name="Kelso J."/>
            <person name="Kitamura H."/>
            <person name="Kitano H."/>
            <person name="Kollias G."/>
            <person name="Krishnan S.P."/>
            <person name="Kruger A."/>
            <person name="Kummerfeld S.K."/>
            <person name="Kurochkin I.V."/>
            <person name="Lareau L.F."/>
            <person name="Lazarevic D."/>
            <person name="Lipovich L."/>
            <person name="Liu J."/>
            <person name="Liuni S."/>
            <person name="McWilliam S."/>
            <person name="Madan Babu M."/>
            <person name="Madera M."/>
            <person name="Marchionni L."/>
            <person name="Matsuda H."/>
            <person name="Matsuzawa S."/>
            <person name="Miki H."/>
            <person name="Mignone F."/>
            <person name="Miyake S."/>
            <person name="Morris K."/>
            <person name="Mottagui-Tabar S."/>
            <person name="Mulder N."/>
            <person name="Nakano N."/>
            <person name="Nakauchi H."/>
            <person name="Ng P."/>
            <person name="Nilsson R."/>
            <person name="Nishiguchi S."/>
            <person name="Nishikawa S."/>
            <person name="Nori F."/>
            <person name="Ohara O."/>
            <person name="Okazaki Y."/>
            <person name="Orlando V."/>
            <person name="Pang K.C."/>
            <person name="Pavan W.J."/>
            <person name="Pavesi G."/>
            <person name="Pesole G."/>
            <person name="Petrovsky N."/>
            <person name="Piazza S."/>
            <person name="Reed J."/>
            <person name="Reid J.F."/>
            <person name="Ring B.Z."/>
            <person name="Ringwald M."/>
            <person name="Rost B."/>
            <person name="Ruan Y."/>
            <person name="Salzberg S.L."/>
            <person name="Sandelin A."/>
            <person name="Schneider C."/>
            <person name="Schoenbach C."/>
            <person name="Sekiguchi K."/>
            <person name="Semple C.A."/>
            <person name="Seno S."/>
            <person name="Sessa L."/>
            <person name="Sheng Y."/>
            <person name="Shibata Y."/>
            <person name="Shimada H."/>
            <person name="Shimada K."/>
            <person name="Silva D."/>
            <person name="Sinclair B."/>
            <person name="Sperling S."/>
            <person name="Stupka E."/>
            <person name="Sugiura K."/>
            <person name="Sultana R."/>
            <person name="Takenaka Y."/>
            <person name="Taki K."/>
            <person name="Tammoja K."/>
            <person name="Tan S.L."/>
            <person name="Tang S."/>
            <person name="Taylor M.S."/>
            <person name="Tegner J."/>
            <person name="Teichmann S.A."/>
            <person name="Ueda H.R."/>
            <person name="van Nimwegen E."/>
            <person name="Verardo R."/>
            <person name="Wei C.L."/>
            <person name="Yagi K."/>
            <person name="Yamanishi H."/>
            <person name="Zabarovsky E."/>
            <person name="Zhu S."/>
            <person name="Zimmer A."/>
            <person name="Hide W."/>
            <person name="Bult C."/>
            <person name="Grimmond S.M."/>
            <person name="Teasdale R.D."/>
            <person name="Liu E.T."/>
            <person name="Brusic V."/>
            <person name="Quackenbush J."/>
            <person name="Wahlestedt C."/>
            <person name="Mattick J.S."/>
            <person name="Hume D.A."/>
            <person name="Kai C."/>
            <person name="Sasaki D."/>
            <person name="Tomaru Y."/>
            <person name="Fukuda S."/>
            <person name="Kanamori-Katayama M."/>
            <person name="Suzuki M."/>
            <person name="Aoki J."/>
            <person name="Arakawa T."/>
            <person name="Iida J."/>
            <person name="Imamura K."/>
            <person name="Itoh M."/>
            <person name="Kato T."/>
            <person name="Kawaji H."/>
            <person name="Kawagashira N."/>
            <person name="Kawashima T."/>
            <person name="Kojima M."/>
            <person name="Kondo S."/>
            <person name="Konno H."/>
            <person name="Nakano K."/>
            <person name="Ninomiya N."/>
            <person name="Nishio T."/>
            <person name="Okada M."/>
            <person name="Plessy C."/>
            <person name="Shibata K."/>
            <person name="Shiraki T."/>
            <person name="Suzuki S."/>
            <person name="Tagami M."/>
            <person name="Waki K."/>
            <person name="Watahiki A."/>
            <person name="Okamura-Oho Y."/>
            <person name="Suzuki H."/>
            <person name="Kawai J."/>
            <person name="Hayashizaki Y."/>
        </authorList>
    </citation>
    <scope>NUCLEOTIDE SEQUENCE [LARGE SCALE MRNA] (ISOFORMS 2 AND 3)</scope>
    <source>
        <strain>C57BL/6J</strain>
        <tissue>Head</tissue>
        <tissue>Lung</tissue>
    </source>
</reference>
<reference key="3">
    <citation type="journal article" date="2013" name="Mol. Cell">
        <title>SIRT5-mediated lysine desuccinylation impacts diverse metabolic pathways.</title>
        <authorList>
            <person name="Park J."/>
            <person name="Chen Y."/>
            <person name="Tishkoff D.X."/>
            <person name="Peng C."/>
            <person name="Tan M."/>
            <person name="Dai L."/>
            <person name="Xie Z."/>
            <person name="Zhang Y."/>
            <person name="Zwaans B.M."/>
            <person name="Skinner M.E."/>
            <person name="Lombard D.B."/>
            <person name="Zhao Y."/>
        </authorList>
    </citation>
    <scope>ACETYLATION [LARGE SCALE ANALYSIS] AT LYS-401</scope>
    <scope>IDENTIFICATION BY MASS SPECTROMETRY [LARGE SCALE ANALYSIS]</scope>
    <source>
        <tissue>Embryonic fibroblast</tissue>
    </source>
</reference>
<feature type="chain" id="PRO_0000287496" description="ZZ-type zinc finger-containing protein 3">
    <location>
        <begin position="1"/>
        <end position="910"/>
    </location>
</feature>
<feature type="domain" description="HTH myb-type" evidence="3">
    <location>
        <begin position="654"/>
        <end position="714"/>
    </location>
</feature>
<feature type="DNA-binding region" description="H-T-H motif" evidence="3">
    <location>
        <begin position="687"/>
        <end position="710"/>
    </location>
</feature>
<feature type="zinc finger region" description="ZZ-type" evidence="2">
    <location>
        <begin position="825"/>
        <end position="884"/>
    </location>
</feature>
<feature type="region of interest" description="Disordered" evidence="4">
    <location>
        <begin position="41"/>
        <end position="117"/>
    </location>
</feature>
<feature type="region of interest" description="Disordered" evidence="4">
    <location>
        <begin position="133"/>
        <end position="153"/>
    </location>
</feature>
<feature type="region of interest" description="Disordered" evidence="4">
    <location>
        <begin position="303"/>
        <end position="358"/>
    </location>
</feature>
<feature type="region of interest" description="Disordered" evidence="4">
    <location>
        <begin position="373"/>
        <end position="444"/>
    </location>
</feature>
<feature type="region of interest" description="Disordered" evidence="4">
    <location>
        <begin position="609"/>
        <end position="641"/>
    </location>
</feature>
<feature type="compositionally biased region" description="Polar residues" evidence="4">
    <location>
        <begin position="67"/>
        <end position="84"/>
    </location>
</feature>
<feature type="compositionally biased region" description="Basic and acidic residues" evidence="4">
    <location>
        <begin position="96"/>
        <end position="116"/>
    </location>
</feature>
<feature type="compositionally biased region" description="Basic and acidic residues" evidence="4">
    <location>
        <begin position="142"/>
        <end position="153"/>
    </location>
</feature>
<feature type="compositionally biased region" description="Polar residues" evidence="4">
    <location>
        <begin position="331"/>
        <end position="347"/>
    </location>
</feature>
<feature type="compositionally biased region" description="Polar residues" evidence="4">
    <location>
        <begin position="397"/>
        <end position="434"/>
    </location>
</feature>
<feature type="compositionally biased region" description="Basic and acidic residues" evidence="4">
    <location>
        <begin position="613"/>
        <end position="622"/>
    </location>
</feature>
<feature type="binding site" evidence="2">
    <location>
        <position position="830"/>
    </location>
    <ligand>
        <name>Zn(2+)</name>
        <dbReference type="ChEBI" id="CHEBI:29105"/>
        <label>1</label>
    </ligand>
</feature>
<feature type="binding site" evidence="2">
    <location>
        <position position="833"/>
    </location>
    <ligand>
        <name>Zn(2+)</name>
        <dbReference type="ChEBI" id="CHEBI:29105"/>
        <label>1</label>
    </ligand>
</feature>
<feature type="binding site" evidence="2">
    <location>
        <position position="845"/>
    </location>
    <ligand>
        <name>Zn(2+)</name>
        <dbReference type="ChEBI" id="CHEBI:29105"/>
        <label>2</label>
    </ligand>
</feature>
<feature type="binding site" evidence="2">
    <location>
        <position position="848"/>
    </location>
    <ligand>
        <name>Zn(2+)</name>
        <dbReference type="ChEBI" id="CHEBI:29105"/>
        <label>2</label>
    </ligand>
</feature>
<feature type="binding site" evidence="2">
    <location>
        <position position="857"/>
    </location>
    <ligand>
        <name>Zn(2+)</name>
        <dbReference type="ChEBI" id="CHEBI:29105"/>
        <label>1</label>
    </ligand>
</feature>
<feature type="binding site" evidence="2">
    <location>
        <position position="860"/>
    </location>
    <ligand>
        <name>Zn(2+)</name>
        <dbReference type="ChEBI" id="CHEBI:29105"/>
        <label>1</label>
    </ligand>
</feature>
<feature type="binding site" evidence="2">
    <location>
        <position position="870"/>
    </location>
    <ligand>
        <name>Zn(2+)</name>
        <dbReference type="ChEBI" id="CHEBI:29105"/>
        <label>2</label>
    </ligand>
</feature>
<feature type="binding site" evidence="2">
    <location>
        <position position="874"/>
    </location>
    <ligand>
        <name>Zn(2+)</name>
        <dbReference type="ChEBI" id="CHEBI:29105"/>
        <label>2</label>
    </ligand>
</feature>
<feature type="modified residue" description="Phosphoserine" evidence="1">
    <location>
        <position position="89"/>
    </location>
</feature>
<feature type="modified residue" description="Phosphoserine" evidence="1">
    <location>
        <position position="96"/>
    </location>
</feature>
<feature type="modified residue" description="Phosphoserine" evidence="1">
    <location>
        <position position="137"/>
    </location>
</feature>
<feature type="modified residue" description="Phosphoserine" evidence="1">
    <location>
        <position position="138"/>
    </location>
</feature>
<feature type="modified residue" description="Phosphoserine" evidence="1">
    <location>
        <position position="142"/>
    </location>
</feature>
<feature type="modified residue" description="N6-acetyllysine" evidence="6">
    <location>
        <position position="401"/>
    </location>
</feature>
<feature type="modified residue" description="Phosphoserine" evidence="1">
    <location>
        <position position="613"/>
    </location>
</feature>
<feature type="modified residue" description="N6-acetyllysine" evidence="1">
    <location>
        <position position="708"/>
    </location>
</feature>
<feature type="cross-link" description="Glycyl lysine isopeptide (Lys-Gly) (interchain with G-Cter in SUMO2)" evidence="1">
    <location>
        <position position="283"/>
    </location>
</feature>
<feature type="cross-link" description="Glycyl lysine isopeptide (Lys-Gly) (interchain with G-Cter in SUMO2)" evidence="1">
    <location>
        <position position="654"/>
    </location>
</feature>
<feature type="cross-link" description="Glycyl lysine isopeptide (Lys-Gly) (interchain with G-Cter in SUMO2)" evidence="1">
    <location>
        <position position="715"/>
    </location>
</feature>
<feature type="splice variant" id="VSP_025514" description="In isoform 2." evidence="5">
    <location>
        <begin position="1"/>
        <end position="501"/>
    </location>
</feature>
<feature type="splice variant" id="VSP_025515" description="In isoform 3." evidence="5">
    <location>
        <begin position="1"/>
        <end position="496"/>
    </location>
</feature>
<feature type="splice variant" id="VSP_025516" description="In isoform 3." evidence="5">
    <original>FESDHVALKHNKD</original>
    <variation>MLGSEVLVQHFNS</variation>
    <location>
        <begin position="497"/>
        <end position="509"/>
    </location>
</feature>
<feature type="splice variant" id="VSP_025517" description="In isoform 2." evidence="5">
    <original>VALKHNKD</original>
    <variation>MIDLWLYS</variation>
    <location>
        <begin position="502"/>
        <end position="509"/>
    </location>
</feature>
<feature type="splice variant" id="VSP_025518" description="In isoform 3." evidence="5">
    <location>
        <position position="605"/>
    </location>
</feature>
<accession>Q6KAQ7</accession>
<accession>Q3TMK6</accession>
<accession>Q3V189</accession>